<dbReference type="EC" id="6.3.3.1" evidence="1"/>
<dbReference type="EMBL" id="CP001598">
    <property type="protein sequence ID" value="ACQ47153.1"/>
    <property type="molecule type" value="Genomic_DNA"/>
</dbReference>
<dbReference type="RefSeq" id="WP_001262436.1">
    <property type="nucleotide sequence ID" value="NC_012659.1"/>
</dbReference>
<dbReference type="SMR" id="C3PBN2"/>
<dbReference type="GeneID" id="45020355"/>
<dbReference type="KEGG" id="bai:BAA_0351"/>
<dbReference type="HOGENOM" id="CLU_047116_0_0_9"/>
<dbReference type="UniPathway" id="UPA00074">
    <property type="reaction ID" value="UER00129"/>
</dbReference>
<dbReference type="GO" id="GO:0005829">
    <property type="term" value="C:cytosol"/>
    <property type="evidence" value="ECO:0007669"/>
    <property type="project" value="TreeGrafter"/>
</dbReference>
<dbReference type="GO" id="GO:0005524">
    <property type="term" value="F:ATP binding"/>
    <property type="evidence" value="ECO:0007669"/>
    <property type="project" value="UniProtKB-KW"/>
</dbReference>
<dbReference type="GO" id="GO:0004637">
    <property type="term" value="F:phosphoribosylamine-glycine ligase activity"/>
    <property type="evidence" value="ECO:0007669"/>
    <property type="project" value="TreeGrafter"/>
</dbReference>
<dbReference type="GO" id="GO:0004641">
    <property type="term" value="F:phosphoribosylformylglycinamidine cyclo-ligase activity"/>
    <property type="evidence" value="ECO:0007669"/>
    <property type="project" value="UniProtKB-UniRule"/>
</dbReference>
<dbReference type="GO" id="GO:0006189">
    <property type="term" value="P:'de novo' IMP biosynthetic process"/>
    <property type="evidence" value="ECO:0007669"/>
    <property type="project" value="UniProtKB-UniRule"/>
</dbReference>
<dbReference type="GO" id="GO:0046084">
    <property type="term" value="P:adenine biosynthetic process"/>
    <property type="evidence" value="ECO:0007669"/>
    <property type="project" value="TreeGrafter"/>
</dbReference>
<dbReference type="CDD" id="cd02196">
    <property type="entry name" value="PurM"/>
    <property type="match status" value="1"/>
</dbReference>
<dbReference type="FunFam" id="3.30.1330.10:FF:000001">
    <property type="entry name" value="Phosphoribosylformylglycinamidine cyclo-ligase"/>
    <property type="match status" value="1"/>
</dbReference>
<dbReference type="FunFam" id="3.90.650.10:FF:000001">
    <property type="entry name" value="Phosphoribosylformylglycinamidine cyclo-ligase"/>
    <property type="match status" value="1"/>
</dbReference>
<dbReference type="Gene3D" id="3.90.650.10">
    <property type="entry name" value="PurM-like C-terminal domain"/>
    <property type="match status" value="1"/>
</dbReference>
<dbReference type="Gene3D" id="3.30.1330.10">
    <property type="entry name" value="PurM-like, N-terminal domain"/>
    <property type="match status" value="1"/>
</dbReference>
<dbReference type="HAMAP" id="MF_00741">
    <property type="entry name" value="AIRS"/>
    <property type="match status" value="1"/>
</dbReference>
<dbReference type="InterPro" id="IPR010918">
    <property type="entry name" value="PurM-like_C_dom"/>
</dbReference>
<dbReference type="InterPro" id="IPR036676">
    <property type="entry name" value="PurM-like_C_sf"/>
</dbReference>
<dbReference type="InterPro" id="IPR016188">
    <property type="entry name" value="PurM-like_N"/>
</dbReference>
<dbReference type="InterPro" id="IPR036921">
    <property type="entry name" value="PurM-like_N_sf"/>
</dbReference>
<dbReference type="InterPro" id="IPR004733">
    <property type="entry name" value="PurM_cligase"/>
</dbReference>
<dbReference type="NCBIfam" id="TIGR00878">
    <property type="entry name" value="purM"/>
    <property type="match status" value="1"/>
</dbReference>
<dbReference type="PANTHER" id="PTHR10520:SF12">
    <property type="entry name" value="TRIFUNCTIONAL PURINE BIOSYNTHETIC PROTEIN ADENOSINE-3"/>
    <property type="match status" value="1"/>
</dbReference>
<dbReference type="PANTHER" id="PTHR10520">
    <property type="entry name" value="TRIFUNCTIONAL PURINE BIOSYNTHETIC PROTEIN ADENOSINE-3-RELATED"/>
    <property type="match status" value="1"/>
</dbReference>
<dbReference type="Pfam" id="PF00586">
    <property type="entry name" value="AIRS"/>
    <property type="match status" value="1"/>
</dbReference>
<dbReference type="Pfam" id="PF02769">
    <property type="entry name" value="AIRS_C"/>
    <property type="match status" value="1"/>
</dbReference>
<dbReference type="SUPFAM" id="SSF56042">
    <property type="entry name" value="PurM C-terminal domain-like"/>
    <property type="match status" value="1"/>
</dbReference>
<dbReference type="SUPFAM" id="SSF55326">
    <property type="entry name" value="PurM N-terminal domain-like"/>
    <property type="match status" value="1"/>
</dbReference>
<reference key="1">
    <citation type="submission" date="2009-04" db="EMBL/GenBank/DDBJ databases">
        <title>Genome sequence of Bacillus anthracis A0248.</title>
        <authorList>
            <person name="Dodson R.J."/>
            <person name="Munk A.C."/>
            <person name="Bruce D."/>
            <person name="Detter C."/>
            <person name="Tapia R."/>
            <person name="Sutton G."/>
            <person name="Sims D."/>
            <person name="Brettin T."/>
        </authorList>
    </citation>
    <scope>NUCLEOTIDE SEQUENCE [LARGE SCALE GENOMIC DNA]</scope>
    <source>
        <strain>A0248</strain>
    </source>
</reference>
<name>PUR5_BACAA</name>
<proteinExistence type="inferred from homology"/>
<gene>
    <name evidence="1" type="primary">purM</name>
    <name type="ordered locus">BAA_0351</name>
</gene>
<feature type="chain" id="PRO_1000148264" description="Phosphoribosylformylglycinamidine cyclo-ligase">
    <location>
        <begin position="1"/>
        <end position="346"/>
    </location>
</feature>
<keyword id="KW-0067">ATP-binding</keyword>
<keyword id="KW-0963">Cytoplasm</keyword>
<keyword id="KW-0436">Ligase</keyword>
<keyword id="KW-0547">Nucleotide-binding</keyword>
<keyword id="KW-0658">Purine biosynthesis</keyword>
<protein>
    <recommendedName>
        <fullName evidence="1">Phosphoribosylformylglycinamidine cyclo-ligase</fullName>
        <ecNumber evidence="1">6.3.3.1</ecNumber>
    </recommendedName>
    <alternativeName>
        <fullName evidence="1">AIR synthase</fullName>
    </alternativeName>
    <alternativeName>
        <fullName evidence="1">AIRS</fullName>
    </alternativeName>
    <alternativeName>
        <fullName evidence="1">Phosphoribosyl-aminoimidazole synthetase</fullName>
    </alternativeName>
</protein>
<sequence length="346" mass="37256">MANAYKQAGVDIEAGYEAVSRMKKHVQTTMRKEVLGGLGGFGGMFDLSKFALEEPVLVSGTDGVGTKLMLAFMADKHDTIGIDAVAMCVNDIVVQGAEPLFFLDYIACGKAEPSKIENIVKGISEGCRQAGCALIGGETAEMPGMYSTEEYDLAGFTVGIVDKKKIVTGEKIEAGHVLIGLASSGIHSNGYSLVRKVLLEDGELSLDRIYGRLELPLGEELLKPTKIYVKPILELLKNHEVYGMAHITGGGFIENIPRMLPEGIGAEIELGSWKIQPIFSLLQEVGKLEEKEMFNIFNMGIGMVVAVKEEDAKDIVRLLEEQGETARIIGRTVQGAGVTFNGGKAL</sequence>
<evidence type="ECO:0000255" key="1">
    <source>
        <dbReference type="HAMAP-Rule" id="MF_00741"/>
    </source>
</evidence>
<accession>C3PBN2</accession>
<organism>
    <name type="scientific">Bacillus anthracis (strain A0248)</name>
    <dbReference type="NCBI Taxonomy" id="592021"/>
    <lineage>
        <taxon>Bacteria</taxon>
        <taxon>Bacillati</taxon>
        <taxon>Bacillota</taxon>
        <taxon>Bacilli</taxon>
        <taxon>Bacillales</taxon>
        <taxon>Bacillaceae</taxon>
        <taxon>Bacillus</taxon>
        <taxon>Bacillus cereus group</taxon>
    </lineage>
</organism>
<comment type="catalytic activity">
    <reaction evidence="1">
        <text>2-formamido-N(1)-(5-O-phospho-beta-D-ribosyl)acetamidine + ATP = 5-amino-1-(5-phospho-beta-D-ribosyl)imidazole + ADP + phosphate + H(+)</text>
        <dbReference type="Rhea" id="RHEA:23032"/>
        <dbReference type="ChEBI" id="CHEBI:15378"/>
        <dbReference type="ChEBI" id="CHEBI:30616"/>
        <dbReference type="ChEBI" id="CHEBI:43474"/>
        <dbReference type="ChEBI" id="CHEBI:137981"/>
        <dbReference type="ChEBI" id="CHEBI:147287"/>
        <dbReference type="ChEBI" id="CHEBI:456216"/>
        <dbReference type="EC" id="6.3.3.1"/>
    </reaction>
</comment>
<comment type="pathway">
    <text evidence="1">Purine metabolism; IMP biosynthesis via de novo pathway; 5-amino-1-(5-phospho-D-ribosyl)imidazole from N(2)-formyl-N(1)-(5-phospho-D-ribosyl)glycinamide: step 2/2.</text>
</comment>
<comment type="subcellular location">
    <subcellularLocation>
        <location evidence="1">Cytoplasm</location>
    </subcellularLocation>
</comment>
<comment type="similarity">
    <text evidence="1">Belongs to the AIR synthase family.</text>
</comment>